<dbReference type="EMBL" id="AC240504">
    <property type="status" value="NOT_ANNOTATED_CDS"/>
    <property type="molecule type" value="Genomic_DNA"/>
</dbReference>
<dbReference type="CCDS" id="CCDS87760.1"/>
<dbReference type="RefSeq" id="NP_001335001.1">
    <property type="nucleotide sequence ID" value="NM_001348072.1"/>
</dbReference>
<dbReference type="BioMuta" id="FAM236B"/>
<dbReference type="MassIVE" id="A0A1B0GV22"/>
<dbReference type="DNASU" id="100129407"/>
<dbReference type="Ensembl" id="ENST00000596535.3">
    <property type="protein sequence ID" value="ENSP00000489894.1"/>
    <property type="gene ID" value="ENSG00000268994.3"/>
</dbReference>
<dbReference type="GeneID" id="100132304"/>
<dbReference type="KEGG" id="hsa:100129407"/>
<dbReference type="KEGG" id="hsa:100132304"/>
<dbReference type="MANE-Select" id="ENST00000596535.3">
    <property type="protein sequence ID" value="ENSP00000489894.1"/>
    <property type="RefSeq nucleotide sequence ID" value="NM_001348072.1"/>
    <property type="RefSeq protein sequence ID" value="NP_001335001.1"/>
</dbReference>
<dbReference type="AGR" id="HGNC:44268"/>
<dbReference type="AGR" id="HGNC:52640"/>
<dbReference type="CTD" id="100129407"/>
<dbReference type="CTD" id="100132304"/>
<dbReference type="GeneCards" id="FAM236B"/>
<dbReference type="HGNC" id="HGNC:52640">
    <property type="gene designation" value="FAM236B"/>
</dbReference>
<dbReference type="HPA" id="ENSG00000268994">
    <property type="expression patterns" value="Tissue enriched (testis)"/>
</dbReference>
<dbReference type="neXtProt" id="NX_A0A1B0GV22"/>
<dbReference type="VEuPathDB" id="HostDB:ENSG00000268994"/>
<dbReference type="GeneTree" id="ENSGT00410000029400"/>
<dbReference type="InParanoid" id="A0A1B0GV22"/>
<dbReference type="OMA" id="SWRSWFQ"/>
<dbReference type="OrthoDB" id="9538021at2759"/>
<dbReference type="PAN-GO" id="A0A1B0GV22">
    <property type="GO annotations" value="0 GO annotations based on evolutionary models"/>
</dbReference>
<dbReference type="PhylomeDB" id="A0A1B0GV22"/>
<dbReference type="PathwayCommons" id="A0A1B0GV22"/>
<dbReference type="BioGRID-ORCS" id="100129407">
    <property type="hits" value="0 hits in 2 CRISPR screens"/>
</dbReference>
<dbReference type="BioGRID-ORCS" id="100132304">
    <property type="hits" value="0 hits in 1 CRISPR screen"/>
</dbReference>
<dbReference type="Pharos" id="A0A1B0GV22">
    <property type="development level" value="Tdark"/>
</dbReference>
<dbReference type="PRO" id="PR:A0A1B0GV22"/>
<dbReference type="Proteomes" id="UP000005640">
    <property type="component" value="Chromosome X"/>
</dbReference>
<dbReference type="RNAct" id="A0A1B0GV22">
    <property type="molecule type" value="protein"/>
</dbReference>
<dbReference type="Bgee" id="ENSG00000268994">
    <property type="expression patterns" value="Expressed in male germ line stem cell (sensu Vertebrata) in testis and 69 other cell types or tissues"/>
</dbReference>
<comment type="similarity">
    <text evidence="1">Belongs to the FAM236 family.</text>
</comment>
<keyword id="KW-1185">Reference proteome</keyword>
<evidence type="ECO:0000305" key="1"/>
<evidence type="ECO:0000312" key="2">
    <source>
        <dbReference type="HGNC" id="HGNC:52640"/>
    </source>
</evidence>
<accession>A0A1B0GV22</accession>
<gene>
    <name evidence="2" type="primary">FAM236B</name>
</gene>
<proteinExistence type="inferred from homology"/>
<reference key="1">
    <citation type="journal article" date="2005" name="Nature">
        <title>The DNA sequence of the human X chromosome.</title>
        <authorList>
            <person name="Ross M.T."/>
            <person name="Grafham D.V."/>
            <person name="Coffey A.J."/>
            <person name="Scherer S."/>
            <person name="McLay K."/>
            <person name="Muzny D."/>
            <person name="Platzer M."/>
            <person name="Howell G.R."/>
            <person name="Burrows C."/>
            <person name="Bird C.P."/>
            <person name="Frankish A."/>
            <person name="Lovell F.L."/>
            <person name="Howe K.L."/>
            <person name="Ashurst J.L."/>
            <person name="Fulton R.S."/>
            <person name="Sudbrak R."/>
            <person name="Wen G."/>
            <person name="Jones M.C."/>
            <person name="Hurles M.E."/>
            <person name="Andrews T.D."/>
            <person name="Scott C.E."/>
            <person name="Searle S."/>
            <person name="Ramser J."/>
            <person name="Whittaker A."/>
            <person name="Deadman R."/>
            <person name="Carter N.P."/>
            <person name="Hunt S.E."/>
            <person name="Chen R."/>
            <person name="Cree A."/>
            <person name="Gunaratne P."/>
            <person name="Havlak P."/>
            <person name="Hodgson A."/>
            <person name="Metzker M.L."/>
            <person name="Richards S."/>
            <person name="Scott G."/>
            <person name="Steffen D."/>
            <person name="Sodergren E."/>
            <person name="Wheeler D.A."/>
            <person name="Worley K.C."/>
            <person name="Ainscough R."/>
            <person name="Ambrose K.D."/>
            <person name="Ansari-Lari M.A."/>
            <person name="Aradhya S."/>
            <person name="Ashwell R.I."/>
            <person name="Babbage A.K."/>
            <person name="Bagguley C.L."/>
            <person name="Ballabio A."/>
            <person name="Banerjee R."/>
            <person name="Barker G.E."/>
            <person name="Barlow K.F."/>
            <person name="Barrett I.P."/>
            <person name="Bates K.N."/>
            <person name="Beare D.M."/>
            <person name="Beasley H."/>
            <person name="Beasley O."/>
            <person name="Beck A."/>
            <person name="Bethel G."/>
            <person name="Blechschmidt K."/>
            <person name="Brady N."/>
            <person name="Bray-Allen S."/>
            <person name="Bridgeman A.M."/>
            <person name="Brown A.J."/>
            <person name="Brown M.J."/>
            <person name="Bonnin D."/>
            <person name="Bruford E.A."/>
            <person name="Buhay C."/>
            <person name="Burch P."/>
            <person name="Burford D."/>
            <person name="Burgess J."/>
            <person name="Burrill W."/>
            <person name="Burton J."/>
            <person name="Bye J.M."/>
            <person name="Carder C."/>
            <person name="Carrel L."/>
            <person name="Chako J."/>
            <person name="Chapman J.C."/>
            <person name="Chavez D."/>
            <person name="Chen E."/>
            <person name="Chen G."/>
            <person name="Chen Y."/>
            <person name="Chen Z."/>
            <person name="Chinault C."/>
            <person name="Ciccodicola A."/>
            <person name="Clark S.Y."/>
            <person name="Clarke G."/>
            <person name="Clee C.M."/>
            <person name="Clegg S."/>
            <person name="Clerc-Blankenburg K."/>
            <person name="Clifford K."/>
            <person name="Cobley V."/>
            <person name="Cole C.G."/>
            <person name="Conquer J.S."/>
            <person name="Corby N."/>
            <person name="Connor R.E."/>
            <person name="David R."/>
            <person name="Davies J."/>
            <person name="Davis C."/>
            <person name="Davis J."/>
            <person name="Delgado O."/>
            <person name="Deshazo D."/>
            <person name="Dhami P."/>
            <person name="Ding Y."/>
            <person name="Dinh H."/>
            <person name="Dodsworth S."/>
            <person name="Draper H."/>
            <person name="Dugan-Rocha S."/>
            <person name="Dunham A."/>
            <person name="Dunn M."/>
            <person name="Durbin K.J."/>
            <person name="Dutta I."/>
            <person name="Eades T."/>
            <person name="Ellwood M."/>
            <person name="Emery-Cohen A."/>
            <person name="Errington H."/>
            <person name="Evans K.L."/>
            <person name="Faulkner L."/>
            <person name="Francis F."/>
            <person name="Frankland J."/>
            <person name="Fraser A.E."/>
            <person name="Galgoczy P."/>
            <person name="Gilbert J."/>
            <person name="Gill R."/>
            <person name="Gloeckner G."/>
            <person name="Gregory S.G."/>
            <person name="Gribble S."/>
            <person name="Griffiths C."/>
            <person name="Grocock R."/>
            <person name="Gu Y."/>
            <person name="Gwilliam R."/>
            <person name="Hamilton C."/>
            <person name="Hart E.A."/>
            <person name="Hawes A."/>
            <person name="Heath P.D."/>
            <person name="Heitmann K."/>
            <person name="Hennig S."/>
            <person name="Hernandez J."/>
            <person name="Hinzmann B."/>
            <person name="Ho S."/>
            <person name="Hoffs M."/>
            <person name="Howden P.J."/>
            <person name="Huckle E.J."/>
            <person name="Hume J."/>
            <person name="Hunt P.J."/>
            <person name="Hunt A.R."/>
            <person name="Isherwood J."/>
            <person name="Jacob L."/>
            <person name="Johnson D."/>
            <person name="Jones S."/>
            <person name="de Jong P.J."/>
            <person name="Joseph S.S."/>
            <person name="Keenan S."/>
            <person name="Kelly S."/>
            <person name="Kershaw J.K."/>
            <person name="Khan Z."/>
            <person name="Kioschis P."/>
            <person name="Klages S."/>
            <person name="Knights A.J."/>
            <person name="Kosiura A."/>
            <person name="Kovar-Smith C."/>
            <person name="Laird G.K."/>
            <person name="Langford C."/>
            <person name="Lawlor S."/>
            <person name="Leversha M."/>
            <person name="Lewis L."/>
            <person name="Liu W."/>
            <person name="Lloyd C."/>
            <person name="Lloyd D.M."/>
            <person name="Loulseged H."/>
            <person name="Loveland J.E."/>
            <person name="Lovell J.D."/>
            <person name="Lozado R."/>
            <person name="Lu J."/>
            <person name="Lyne R."/>
            <person name="Ma J."/>
            <person name="Maheshwari M."/>
            <person name="Matthews L.H."/>
            <person name="McDowall J."/>
            <person name="McLaren S."/>
            <person name="McMurray A."/>
            <person name="Meidl P."/>
            <person name="Meitinger T."/>
            <person name="Milne S."/>
            <person name="Miner G."/>
            <person name="Mistry S.L."/>
            <person name="Morgan M."/>
            <person name="Morris S."/>
            <person name="Mueller I."/>
            <person name="Mullikin J.C."/>
            <person name="Nguyen N."/>
            <person name="Nordsiek G."/>
            <person name="Nyakatura G."/>
            <person name="O'dell C.N."/>
            <person name="Okwuonu G."/>
            <person name="Palmer S."/>
            <person name="Pandian R."/>
            <person name="Parker D."/>
            <person name="Parrish J."/>
            <person name="Pasternak S."/>
            <person name="Patel D."/>
            <person name="Pearce A.V."/>
            <person name="Pearson D.M."/>
            <person name="Pelan S.E."/>
            <person name="Perez L."/>
            <person name="Porter K.M."/>
            <person name="Ramsey Y."/>
            <person name="Reichwald K."/>
            <person name="Rhodes S."/>
            <person name="Ridler K.A."/>
            <person name="Schlessinger D."/>
            <person name="Schueler M.G."/>
            <person name="Sehra H.K."/>
            <person name="Shaw-Smith C."/>
            <person name="Shen H."/>
            <person name="Sheridan E.M."/>
            <person name="Shownkeen R."/>
            <person name="Skuce C.D."/>
            <person name="Smith M.L."/>
            <person name="Sotheran E.C."/>
            <person name="Steingruber H.E."/>
            <person name="Steward C.A."/>
            <person name="Storey R."/>
            <person name="Swann R.M."/>
            <person name="Swarbreck D."/>
            <person name="Tabor P.E."/>
            <person name="Taudien S."/>
            <person name="Taylor T."/>
            <person name="Teague B."/>
            <person name="Thomas K."/>
            <person name="Thorpe A."/>
            <person name="Timms K."/>
            <person name="Tracey A."/>
            <person name="Trevanion S."/>
            <person name="Tromans A.C."/>
            <person name="d'Urso M."/>
            <person name="Verduzco D."/>
            <person name="Villasana D."/>
            <person name="Waldron L."/>
            <person name="Wall M."/>
            <person name="Wang Q."/>
            <person name="Warren J."/>
            <person name="Warry G.L."/>
            <person name="Wei X."/>
            <person name="West A."/>
            <person name="Whitehead S.L."/>
            <person name="Whiteley M.N."/>
            <person name="Wilkinson J.E."/>
            <person name="Willey D.L."/>
            <person name="Williams G."/>
            <person name="Williams L."/>
            <person name="Williamson A."/>
            <person name="Williamson H."/>
            <person name="Wilming L."/>
            <person name="Woodmansey R.L."/>
            <person name="Wray P.W."/>
            <person name="Yen J."/>
            <person name="Zhang J."/>
            <person name="Zhou J."/>
            <person name="Zoghbi H."/>
            <person name="Zorilla S."/>
            <person name="Buck D."/>
            <person name="Reinhardt R."/>
            <person name="Poustka A."/>
            <person name="Rosenthal A."/>
            <person name="Lehrach H."/>
            <person name="Meindl A."/>
            <person name="Minx P.J."/>
            <person name="Hillier L.W."/>
            <person name="Willard H.F."/>
            <person name="Wilson R.K."/>
            <person name="Waterston R.H."/>
            <person name="Rice C.M."/>
            <person name="Vaudin M."/>
            <person name="Coulson A."/>
            <person name="Nelson D.L."/>
            <person name="Weinstock G."/>
            <person name="Sulston J.E."/>
            <person name="Durbin R.M."/>
            <person name="Hubbard T."/>
            <person name="Gibbs R.A."/>
            <person name="Beck S."/>
            <person name="Rogers J."/>
            <person name="Bentley D.R."/>
        </authorList>
    </citation>
    <scope>NUCLEOTIDE SEQUENCE [LARGE SCALE GENOMIC DNA]</scope>
</reference>
<name>F236B_HUMAN</name>
<sequence>MIFTPFLPPADLSVFQNVKGLQNDPEEWVAVSDATEDPSGGTGLPREPALLRGSWRSRFQRALACFTKCFRGGYRALGI</sequence>
<protein>
    <recommendedName>
        <fullName evidence="1">Protein FAM236B</fullName>
    </recommendedName>
</protein>
<organism>
    <name type="scientific">Homo sapiens</name>
    <name type="common">Human</name>
    <dbReference type="NCBI Taxonomy" id="9606"/>
    <lineage>
        <taxon>Eukaryota</taxon>
        <taxon>Metazoa</taxon>
        <taxon>Chordata</taxon>
        <taxon>Craniata</taxon>
        <taxon>Vertebrata</taxon>
        <taxon>Euteleostomi</taxon>
        <taxon>Mammalia</taxon>
        <taxon>Eutheria</taxon>
        <taxon>Euarchontoglires</taxon>
        <taxon>Primates</taxon>
        <taxon>Haplorrhini</taxon>
        <taxon>Catarrhini</taxon>
        <taxon>Hominidae</taxon>
        <taxon>Homo</taxon>
    </lineage>
</organism>
<feature type="chain" id="PRO_0000440024" description="Protein FAM236B">
    <location>
        <begin position="1"/>
        <end position="79"/>
    </location>
</feature>